<comment type="function">
    <text evidence="1">Major role in the synthesis of nucleoside triphosphates other than ATP. The ATP gamma phosphate is transferred to the NDP beta phosphate via a ping-pong mechanism, using a phosphorylated active-site intermediate.</text>
</comment>
<comment type="catalytic activity">
    <reaction evidence="1">
        <text>a 2'-deoxyribonucleoside 5'-diphosphate + ATP = a 2'-deoxyribonucleoside 5'-triphosphate + ADP</text>
        <dbReference type="Rhea" id="RHEA:44640"/>
        <dbReference type="ChEBI" id="CHEBI:30616"/>
        <dbReference type="ChEBI" id="CHEBI:61560"/>
        <dbReference type="ChEBI" id="CHEBI:73316"/>
        <dbReference type="ChEBI" id="CHEBI:456216"/>
        <dbReference type="EC" id="2.7.4.6"/>
    </reaction>
</comment>
<comment type="catalytic activity">
    <reaction evidence="1">
        <text>a ribonucleoside 5'-diphosphate + ATP = a ribonucleoside 5'-triphosphate + ADP</text>
        <dbReference type="Rhea" id="RHEA:18113"/>
        <dbReference type="ChEBI" id="CHEBI:30616"/>
        <dbReference type="ChEBI" id="CHEBI:57930"/>
        <dbReference type="ChEBI" id="CHEBI:61557"/>
        <dbReference type="ChEBI" id="CHEBI:456216"/>
        <dbReference type="EC" id="2.7.4.6"/>
    </reaction>
</comment>
<comment type="cofactor">
    <cofactor evidence="1">
        <name>Mg(2+)</name>
        <dbReference type="ChEBI" id="CHEBI:18420"/>
    </cofactor>
</comment>
<comment type="subunit">
    <text evidence="1">Homotetramer.</text>
</comment>
<comment type="subcellular location">
    <subcellularLocation>
        <location evidence="1">Cytoplasm</location>
    </subcellularLocation>
</comment>
<comment type="similarity">
    <text evidence="1">Belongs to the NDK family.</text>
</comment>
<gene>
    <name evidence="1" type="primary">ndk</name>
    <name type="ordered locus">Saro_0894</name>
</gene>
<accession>Q2G9Y4</accession>
<name>NDK_NOVAD</name>
<sequence length="140" mass="15421">MAVTRTFSIIKPDATRRNLTGAVTKMLEEAGLRVVASKRIHMSREQAEGFYAVHKERPFFGELVEFMISGPVVVQVLEGEDAVKRNRDIMGATNPKDAAPGTIRKELAESIEANSVHGSDSEENAAIEIAYFFKPEEIVG</sequence>
<protein>
    <recommendedName>
        <fullName evidence="1">Nucleoside diphosphate kinase</fullName>
        <shortName evidence="1">NDK</shortName>
        <shortName evidence="1">NDP kinase</shortName>
        <ecNumber evidence="1">2.7.4.6</ecNumber>
    </recommendedName>
    <alternativeName>
        <fullName evidence="1">Nucleoside-2-P kinase</fullName>
    </alternativeName>
</protein>
<feature type="chain" id="PRO_0000242505" description="Nucleoside diphosphate kinase">
    <location>
        <begin position="1"/>
        <end position="140"/>
    </location>
</feature>
<feature type="active site" description="Pros-phosphohistidine intermediate" evidence="1">
    <location>
        <position position="117"/>
    </location>
</feature>
<feature type="binding site" evidence="1">
    <location>
        <position position="11"/>
    </location>
    <ligand>
        <name>ATP</name>
        <dbReference type="ChEBI" id="CHEBI:30616"/>
    </ligand>
</feature>
<feature type="binding site" evidence="1">
    <location>
        <position position="59"/>
    </location>
    <ligand>
        <name>ATP</name>
        <dbReference type="ChEBI" id="CHEBI:30616"/>
    </ligand>
</feature>
<feature type="binding site" evidence="1">
    <location>
        <position position="87"/>
    </location>
    <ligand>
        <name>ATP</name>
        <dbReference type="ChEBI" id="CHEBI:30616"/>
    </ligand>
</feature>
<feature type="binding site" evidence="1">
    <location>
        <position position="93"/>
    </location>
    <ligand>
        <name>ATP</name>
        <dbReference type="ChEBI" id="CHEBI:30616"/>
    </ligand>
</feature>
<feature type="binding site" evidence="1">
    <location>
        <position position="104"/>
    </location>
    <ligand>
        <name>ATP</name>
        <dbReference type="ChEBI" id="CHEBI:30616"/>
    </ligand>
</feature>
<feature type="binding site" evidence="1">
    <location>
        <position position="114"/>
    </location>
    <ligand>
        <name>ATP</name>
        <dbReference type="ChEBI" id="CHEBI:30616"/>
    </ligand>
</feature>
<keyword id="KW-0067">ATP-binding</keyword>
<keyword id="KW-0963">Cytoplasm</keyword>
<keyword id="KW-0418">Kinase</keyword>
<keyword id="KW-0460">Magnesium</keyword>
<keyword id="KW-0479">Metal-binding</keyword>
<keyword id="KW-0546">Nucleotide metabolism</keyword>
<keyword id="KW-0547">Nucleotide-binding</keyword>
<keyword id="KW-0597">Phosphoprotein</keyword>
<keyword id="KW-1185">Reference proteome</keyword>
<keyword id="KW-0808">Transferase</keyword>
<proteinExistence type="inferred from homology"/>
<reference key="1">
    <citation type="submission" date="2006-01" db="EMBL/GenBank/DDBJ databases">
        <title>Complete sequence of Novosphingobium aromaticivorans DSM 12444.</title>
        <authorList>
            <consortium name="US DOE Joint Genome Institute"/>
            <person name="Copeland A."/>
            <person name="Lucas S."/>
            <person name="Lapidus A."/>
            <person name="Barry K."/>
            <person name="Detter J.C."/>
            <person name="Glavina T."/>
            <person name="Hammon N."/>
            <person name="Israni S."/>
            <person name="Pitluck S."/>
            <person name="Chain P."/>
            <person name="Malfatti S."/>
            <person name="Shin M."/>
            <person name="Vergez L."/>
            <person name="Schmutz J."/>
            <person name="Larimer F."/>
            <person name="Land M."/>
            <person name="Kyrpides N."/>
            <person name="Ivanova N."/>
            <person name="Fredrickson J."/>
            <person name="Balkwill D."/>
            <person name="Romine M.F."/>
            <person name="Richardson P."/>
        </authorList>
    </citation>
    <scope>NUCLEOTIDE SEQUENCE [LARGE SCALE GENOMIC DNA]</scope>
    <source>
        <strain>ATCC 700278 / DSM 12444 / CCUG 56034 / CIP 105152 / NBRC 16084 / F199</strain>
    </source>
</reference>
<organism>
    <name type="scientific">Novosphingobium aromaticivorans (strain ATCC 700278 / DSM 12444 / CCUG 56034 / CIP 105152 / NBRC 16084 / F199)</name>
    <dbReference type="NCBI Taxonomy" id="279238"/>
    <lineage>
        <taxon>Bacteria</taxon>
        <taxon>Pseudomonadati</taxon>
        <taxon>Pseudomonadota</taxon>
        <taxon>Alphaproteobacteria</taxon>
        <taxon>Sphingomonadales</taxon>
        <taxon>Sphingomonadaceae</taxon>
        <taxon>Novosphingobium</taxon>
    </lineage>
</organism>
<evidence type="ECO:0000255" key="1">
    <source>
        <dbReference type="HAMAP-Rule" id="MF_00451"/>
    </source>
</evidence>
<dbReference type="EC" id="2.7.4.6" evidence="1"/>
<dbReference type="EMBL" id="CP000248">
    <property type="protein sequence ID" value="ABD25339.1"/>
    <property type="molecule type" value="Genomic_DNA"/>
</dbReference>
<dbReference type="RefSeq" id="WP_011444553.1">
    <property type="nucleotide sequence ID" value="NC_007794.1"/>
</dbReference>
<dbReference type="SMR" id="Q2G9Y4"/>
<dbReference type="STRING" id="279238.Saro_0894"/>
<dbReference type="KEGG" id="nar:Saro_0894"/>
<dbReference type="eggNOG" id="COG0105">
    <property type="taxonomic scope" value="Bacteria"/>
</dbReference>
<dbReference type="HOGENOM" id="CLU_060216_8_1_5"/>
<dbReference type="Proteomes" id="UP000009134">
    <property type="component" value="Chromosome"/>
</dbReference>
<dbReference type="GO" id="GO:0005737">
    <property type="term" value="C:cytoplasm"/>
    <property type="evidence" value="ECO:0007669"/>
    <property type="project" value="UniProtKB-SubCell"/>
</dbReference>
<dbReference type="GO" id="GO:0005524">
    <property type="term" value="F:ATP binding"/>
    <property type="evidence" value="ECO:0007669"/>
    <property type="project" value="UniProtKB-UniRule"/>
</dbReference>
<dbReference type="GO" id="GO:0046872">
    <property type="term" value="F:metal ion binding"/>
    <property type="evidence" value="ECO:0007669"/>
    <property type="project" value="UniProtKB-KW"/>
</dbReference>
<dbReference type="GO" id="GO:0004550">
    <property type="term" value="F:nucleoside diphosphate kinase activity"/>
    <property type="evidence" value="ECO:0007669"/>
    <property type="project" value="UniProtKB-UniRule"/>
</dbReference>
<dbReference type="GO" id="GO:0006241">
    <property type="term" value="P:CTP biosynthetic process"/>
    <property type="evidence" value="ECO:0007669"/>
    <property type="project" value="UniProtKB-UniRule"/>
</dbReference>
<dbReference type="GO" id="GO:0006183">
    <property type="term" value="P:GTP biosynthetic process"/>
    <property type="evidence" value="ECO:0007669"/>
    <property type="project" value="UniProtKB-UniRule"/>
</dbReference>
<dbReference type="GO" id="GO:0006228">
    <property type="term" value="P:UTP biosynthetic process"/>
    <property type="evidence" value="ECO:0007669"/>
    <property type="project" value="UniProtKB-UniRule"/>
</dbReference>
<dbReference type="CDD" id="cd04413">
    <property type="entry name" value="NDPk_I"/>
    <property type="match status" value="1"/>
</dbReference>
<dbReference type="FunFam" id="3.30.70.141:FF:000001">
    <property type="entry name" value="Nucleoside diphosphate kinase"/>
    <property type="match status" value="1"/>
</dbReference>
<dbReference type="Gene3D" id="3.30.70.141">
    <property type="entry name" value="Nucleoside diphosphate kinase-like domain"/>
    <property type="match status" value="1"/>
</dbReference>
<dbReference type="HAMAP" id="MF_00451">
    <property type="entry name" value="NDP_kinase"/>
    <property type="match status" value="1"/>
</dbReference>
<dbReference type="InterPro" id="IPR034907">
    <property type="entry name" value="NDK-like_dom"/>
</dbReference>
<dbReference type="InterPro" id="IPR036850">
    <property type="entry name" value="NDK-like_dom_sf"/>
</dbReference>
<dbReference type="InterPro" id="IPR001564">
    <property type="entry name" value="Nucleoside_diP_kinase"/>
</dbReference>
<dbReference type="InterPro" id="IPR023005">
    <property type="entry name" value="Nucleoside_diP_kinase_AS"/>
</dbReference>
<dbReference type="NCBIfam" id="NF001908">
    <property type="entry name" value="PRK00668.1"/>
    <property type="match status" value="1"/>
</dbReference>
<dbReference type="PANTHER" id="PTHR46161">
    <property type="entry name" value="NUCLEOSIDE DIPHOSPHATE KINASE"/>
    <property type="match status" value="1"/>
</dbReference>
<dbReference type="PANTHER" id="PTHR46161:SF3">
    <property type="entry name" value="NUCLEOSIDE DIPHOSPHATE KINASE DDB_G0292928-RELATED"/>
    <property type="match status" value="1"/>
</dbReference>
<dbReference type="Pfam" id="PF00334">
    <property type="entry name" value="NDK"/>
    <property type="match status" value="1"/>
</dbReference>
<dbReference type="PRINTS" id="PR01243">
    <property type="entry name" value="NUCDPKINASE"/>
</dbReference>
<dbReference type="SMART" id="SM00562">
    <property type="entry name" value="NDK"/>
    <property type="match status" value="1"/>
</dbReference>
<dbReference type="SUPFAM" id="SSF54919">
    <property type="entry name" value="Nucleoside diphosphate kinase, NDK"/>
    <property type="match status" value="1"/>
</dbReference>
<dbReference type="PROSITE" id="PS00469">
    <property type="entry name" value="NDPK"/>
    <property type="match status" value="1"/>
</dbReference>
<dbReference type="PROSITE" id="PS51374">
    <property type="entry name" value="NDPK_LIKE"/>
    <property type="match status" value="1"/>
</dbReference>